<name>MALG_MALAU</name>
<comment type="function">
    <text evidence="7 9 10">Nonribisomal peptide synthetase; part of the gene cluster that mediates the biosynthesis of malbrancheamide, a dichlorinated fungal indole alkaloid that belongs to a family of natural products containing a characteristic bicyclo[2.2.2]diazaoctane core (PubMed:23213353, PubMed:28777910, PubMed:31548667). The first step of malbrancheamide biosynthesis involves coupling of L-proline and L-tryptophan by malG, a bimodular NRPS, to produce L-Pro-L-Trp aldehyde through reductive offloading (PubMed:23213353, PubMed:31548667). This compound undergoes spontaneous cyclization and dehydration to give a dienamine which is reverse prenylated at C-2 by malE (PubMed:31548667). The other prenyltransferase present in the cluster, malB, displays modest activity, suggesting that may be a redundant gene in the pathway (PubMed:31548667). Subsequently, a [4+2] Diels-Alder cyclo-addition catalyzed by the bifunctional enzyme malC forms the characteristic bicyclo[2.2.2]diazaoctane ring of premalbrancheamid (PubMed:31548667). Finally, the flavin-dependent halogenase malA catalyzes the iterative dichlorination of the indole ring of premalbrancheamide to yield C-9 monochlorinated malbrancheamide B, C-8 monochlorinated isomalbrancheamide B, and dichlorinated malbrancheamide (PubMed:28777910, PubMed:31548667). MalA is also able to brominate premalbrancheamide at C-9 to yield malbrancheamide C, and, to a lesser extend, at C-8 to yield isomalbrancheamide C (PubMed:28777910). Finally, malA can brominate C-9 monochlorinated malbrancheamide B at C-8 to yield malbrancheamide D, or C-8 monochlorinated isomalbrancheamide B at C-9 to produce isomalbrancheamide D (PubMed:28777910).</text>
</comment>
<comment type="catalytic activity">
    <reaction evidence="10">
        <text>L-proline + L-tryptophan + 2 ATP + NADPH = (S)-3-(indol-3-ylmethyl)-6,7,8,8a-tetrahydropyrrolo[1,2-a]pyrazin-1-one + 2 AMP + 2 diphosphate + NADP(+) + H2O + H(+)</text>
        <dbReference type="Rhea" id="RHEA:62284"/>
        <dbReference type="ChEBI" id="CHEBI:15377"/>
        <dbReference type="ChEBI" id="CHEBI:15378"/>
        <dbReference type="ChEBI" id="CHEBI:30616"/>
        <dbReference type="ChEBI" id="CHEBI:33019"/>
        <dbReference type="ChEBI" id="CHEBI:57783"/>
        <dbReference type="ChEBI" id="CHEBI:57912"/>
        <dbReference type="ChEBI" id="CHEBI:58349"/>
        <dbReference type="ChEBI" id="CHEBI:60039"/>
        <dbReference type="ChEBI" id="CHEBI:145652"/>
        <dbReference type="ChEBI" id="CHEBI:456215"/>
    </reaction>
    <physiologicalReaction direction="left-to-right" evidence="10">
        <dbReference type="Rhea" id="RHEA:62285"/>
    </physiologicalReaction>
</comment>
<comment type="domain">
    <text evidence="1 10">NRP synthetases are composed of discrete domains (adenylation (A), thiolation (T) or peptidyl carrier protein (PCP) and condensation (C) domains) which when grouped together are referred to as a single module. Each module is responsible for the recognition (via the A domain) and incorporation of a single amino acid into the growing peptide product. Thus, an NRP synthetase is generally composed of one or more modules and can terminate in a thioesterase domain (TE) that releases the newly synthesized peptide from the enzyme. Occasionally, methyltransferase domains (responsible for amino acid methylation) are present within the NRP synthetase (By similarity). MalG has the following bimodular architecture: A1-T1-C1-A2-T2-R. MalG finishes with a reductase-like domain (R) for peptide release, which is consistent with the monooxopiperazine moiety of malbrancheamide (PubMed:31548667).</text>
</comment>
<comment type="biotechnology">
    <text evidence="4 5 6 8">Malbrancheamides have the ability to inhibit calmodulin, calmodulin-dependent phosphodiesterase (PDE1), and induce both endothelium-independent and endothelium-dependent relaxant effects, suggesting their potential as vasorelaxant agents.</text>
</comment>
<comment type="similarity">
    <text evidence="12">Belongs to the NRP synthetase family.</text>
</comment>
<feature type="chain" id="PRO_0000448778" description="Nonribisomal peptide synthetase malG">
    <location>
        <begin position="1"/>
        <end position="2345"/>
    </location>
</feature>
<feature type="domain" description="Carrier 1" evidence="3">
    <location>
        <begin position="766"/>
        <end position="839"/>
    </location>
</feature>
<feature type="domain" description="Carrier 2" evidence="3">
    <location>
        <begin position="1843"/>
        <end position="1926"/>
    </location>
</feature>
<feature type="region of interest" description="Adenylation 1" evidence="2">
    <location>
        <begin position="226"/>
        <end position="620"/>
    </location>
</feature>
<feature type="region of interest" description="Condensation 1" evidence="2">
    <location>
        <begin position="877"/>
        <end position="1292"/>
    </location>
</feature>
<feature type="region of interest" description="Adenylation 2" evidence="2">
    <location>
        <begin position="1317"/>
        <end position="1707"/>
    </location>
</feature>
<feature type="region of interest" description="Reductase (R) domain" evidence="2">
    <location>
        <begin position="1969"/>
        <end position="2256"/>
    </location>
</feature>
<feature type="modified residue" description="O-(pantetheine 4'-phosphoryl)serine" evidence="3">
    <location>
        <position position="800"/>
    </location>
</feature>
<feature type="modified residue" description="O-(pantetheine 4'-phosphoryl)serine" evidence="3">
    <location>
        <position position="1885"/>
    </location>
</feature>
<feature type="mutagenesis site" description="Impairs the reductive release of the malG product." evidence="10">
    <original>Y</original>
    <variation>F</variation>
    <location>
        <position position="2132"/>
    </location>
</feature>
<sequence>MSDDPLLSSPTEAICLNHSVTDLRLAAALKLSWTFLLAHYSGSSEIPLDIRLEYRYIDGSETNFEPFDATFEVDKKSLIEDSIGMIQNMLTPSTRPHSLSNGINSSQSDKHVPEAQVSFTFSSGSRPVLEKGATTRYAATVLELECLQGLKKEYLCRINFNRMMWNVEEATGILRQFRHIAQQIVSADVCATLSQINLMCESDIEQLKRWNSTVPDPVLACIHELFSEQAKKNPTATAVQTSEGSFDYGRLDELSSALACHLSSNGLTRGTPVPLLFDKSMWMVVATLAVLKAGATCVSICTGLPTKAIEDILEQTAAQLVLVSESQGLRLSETRTQVVSDKTMQIWHTMSGKPELPQSDPTDLACIIFTSGSTGKPKGIMLDHIALVTSIRNHGPSLGISSSSRALQFSSYAFDMSFYETYTTLLSGGCICIPSETERLNSLPQFICDHNVNWAFLTPSVLRDFHPSEFPSLRTLATGGEPVGADIANEWAGRLQLFNLWGPAEATICATGPILPGVWIPGTFGKAVGCIAWITQAENPDELVPIGAVGEVLIEGPVLAQGYSGDVEKTKASFIPFPKWRERFELTPRGRVLFRTGDLAQYNPDGTIRYVGRMGTVVKVGGQRVDIDAVEYALRRIDRSSHIAVEAVELEKETGQGPTLIAFLSSDMNGVSGSEKKRCCSIDPGSRSWEAWANIAIRLQDTLAGVLPRYMIPHLFIPVSTIPTTPSGKANKRQLQALVLGQSKAHLLQLCRQRSPDASYPEQHLTENETLLRLLVSDVLGIDRDHVAMNSRFFHLGGDSLAAVKLVALARQQGIQLKVEAILQSCSLREAAGTMISAGEKQKLQSKTSFAINKCDDKLGLLEEATVQCGISESDIEEIYPSTPLQEGLITVTSTFSASKPYVDKILFTLSATADLDRVRDAWNHVVAANDILRSRIILSPAGKAFNVVVRSEPSWQYYKTVQQYLENDNAQDMTFGKELITFNLIASHDQSASARSIGITIHHALYDNWTVSLLHKQAEDAYRGELVEPCSFSTFSHYVLQQSPDINKEFWRKQFLDLRAGTFPELPSSDYVPRANSSSQHLYKGQHQRRDFSMATNIQLAWALLLSLYTNSPDVVYGLVVNGRMAPMPGVGGLVGPTIATVPFRTTVERSMSVQAALEAIQKRVLSIVPFEQTGLQNIARMGEGPKTACNFQNLLVIQQDLEFKGEGIFCRRQNLVGAVNNFPGYGIILLCSATEHGWAFEILYSNSLIPETRARRILLQLDHLLRQLEVDPYRQLAQLELLCPSDKSKLTSWNTQLPIRVNACIPEVFGAQCLVRSERTAVSAWDGSLSYRELDRFSSIVARHLQAVGVGKGTITPILFEKSRWVVVAMLAVLKTGAAFVMLDTNQPLQRKQGICRAVRATTIATSASCAHESKVLANSIYVLDEASITKTDTNQFLPLVEVSPNDLAYVVFTSGSTGEPKGVLIEHASSCSASRAQAAKLGISPDSRVLQLSSYTFDSFAVEILASLLAGCCICIPSESESSNDIAGAVRRFSATWLCITPSVLGLTNPDEVPSLKTVVAVGESARPSQIRLWSTRVNFICGYGPSECSTGASAQLIRSAGSDPRIIGSGMGSCLWVAHTDDHNVLVPIGAIGELLIQGPIVGRGYMNSPEKTRAAFLESTAWIPEFRQVATERFYKTGDLVRQNEDGSIVYLGRKNREVKLRGQRLDLEEVENQLSAALEMDINIVAEVVKPKGVDSQPVLIAFFQVVADVELRSDNITFLELNPDIGLRLLDAEEKLRKILPPVMIPSVYLQVQRMPLTMSGKMNRQALRNKASTRTLSQLFSSGSVRHEDDYLTLQPHESTALFVCQAICGIMRDKIDDTKTLIAGKNVNLSRTGMDSIDAMMLARTISRHFGITLSIRAFLGSSVTVRDIARLIEGVKSEDNLSQFDLYAKYESIWEELRGVVRGLTPSDKPQLCDKTPAGMSVFLTGGTGFLGTHILRQILQDPRVELVTVLTRAESPAHALSKIVESAKIAQWWQESYRNRIDAWVGDLARPRLGLSDDHWARLCGYGEHKFTSIIHNGAAVHWGYDFEKLKPVNVMSTFWLLVSLFIAGPLVNFTYVSALLPECDGLTDREIALKTSDDGYSQTKYVSELLVKNFKEQLCNNPIAIVRPGLLIGSAEHGVANVGDYLWRVVSSAFSVGAYISEKGDAWIYIAAVDWVANQVIREALYESTTDLRIINVTDGLTVKEFWRAIQIASPRQLNALQSEDWLSLIRQQLDVTGKSHPLWPVISFLESSKGCLGFSHNLPPQAHSLSSMIITALIKNVRYLASLGLVSWTTTGSNCDHSVQQRIFRRVL</sequence>
<gene>
    <name evidence="11" type="primary">malG</name>
</gene>
<organism>
    <name type="scientific">Malbranchea aurantiaca</name>
    <dbReference type="NCBI Taxonomy" id="78605"/>
    <lineage>
        <taxon>Eukaryota</taxon>
        <taxon>Fungi</taxon>
        <taxon>Dikarya</taxon>
        <taxon>Ascomycota</taxon>
        <taxon>Pezizomycotina</taxon>
        <taxon>Eurotiomycetes</taxon>
        <taxon>Eurotiomycetidae</taxon>
        <taxon>Onygenales</taxon>
        <taxon>Malbrancheaceae</taxon>
        <taxon>Malbranchea</taxon>
    </lineage>
</organism>
<protein>
    <recommendedName>
        <fullName evidence="11">Nonribisomal peptide synthetase malG</fullName>
        <shortName evidence="11">NRPS malG</shortName>
        <ecNumber evidence="10">1.-.-.-</ecNumber>
        <ecNumber evidence="10">6.3.1.-</ecNumber>
    </recommendedName>
    <alternativeName>
        <fullName evidence="11">Malbrancheamide biosynthesis cluster protein G</fullName>
    </alternativeName>
</protein>
<evidence type="ECO:0000250" key="1">
    <source>
        <dbReference type="UniProtKB" id="A0A144KPJ6"/>
    </source>
</evidence>
<evidence type="ECO:0000255" key="2"/>
<evidence type="ECO:0000255" key="3">
    <source>
        <dbReference type="PROSITE-ProRule" id="PRU00258"/>
    </source>
</evidence>
<evidence type="ECO:0000269" key="4">
    <source>
    </source>
</evidence>
<evidence type="ECO:0000269" key="5">
    <source>
    </source>
</evidence>
<evidence type="ECO:0000269" key="6">
    <source>
    </source>
</evidence>
<evidence type="ECO:0000269" key="7">
    <source>
    </source>
</evidence>
<evidence type="ECO:0000269" key="8">
    <source>
    </source>
</evidence>
<evidence type="ECO:0000269" key="9">
    <source>
    </source>
</evidence>
<evidence type="ECO:0000269" key="10">
    <source>
    </source>
</evidence>
<evidence type="ECO:0000303" key="11">
    <source>
    </source>
</evidence>
<evidence type="ECO:0000305" key="12"/>
<keyword id="KW-0413">Isomerase</keyword>
<keyword id="KW-0436">Ligase</keyword>
<keyword id="KW-0511">Multifunctional enzyme</keyword>
<keyword id="KW-0560">Oxidoreductase</keyword>
<keyword id="KW-0596">Phosphopantetheine</keyword>
<keyword id="KW-0597">Phosphoprotein</keyword>
<keyword id="KW-0677">Repeat</keyword>
<accession>L0E2Z1</accession>
<reference key="1">
    <citation type="journal article" date="2012" name="Med. Chem. Commun.">
        <title>Comparative analysis of the biosynthetic systems for fungal bicyclo[2.2.2]diazaoctane indole alkaloids: the (+)/(-)-notoamide, paraherquamide and malbrancheamide pathways.</title>
        <authorList>
            <person name="Li S."/>
            <person name="Anand K."/>
            <person name="Tran H."/>
            <person name="Yu F."/>
            <person name="Finefield J.M."/>
            <person name="Sunderhaus J.D."/>
            <person name="McAfoos T.J."/>
            <person name="Tsukamoto S."/>
            <person name="Williams R.M."/>
            <person name="Sherman D.H."/>
        </authorList>
    </citation>
    <scope>NUCLEOTIDE SEQUENCE [GENOMIC DNA]</scope>
    <scope>FUNCTION</scope>
    <scope>DOMAIN</scope>
    <source>
        <strain>RRC1813</strain>
    </source>
</reference>
<reference key="2">
    <citation type="journal article" date="2008" name="Bioorg. Med. Chem. Lett.">
        <title>Calmodulin inhibitory activity of the malbrancheamides and various analogs.</title>
        <authorList>
            <person name="Miller K.A."/>
            <person name="Figueroa M."/>
            <person name="Valente M.W."/>
            <person name="Greshock T.J."/>
            <person name="Mata R."/>
            <person name="Williams R.M."/>
        </authorList>
    </citation>
    <scope>BIOTECHNOLOGY</scope>
</reference>
<reference key="3">
    <citation type="journal article" date="2009" name="Anal. Biochem.">
        <title>An alternative assay to discover potential calmodulin inhibitors using a human fluorophore-labeled CaM protein.</title>
        <authorList>
            <person name="Gonzalez-Andrade M."/>
            <person name="Figueroa M."/>
            <person name="Rodriguez-Sotres R."/>
            <person name="Mata R."/>
            <person name="Sosa-Peinado A."/>
        </authorList>
    </citation>
    <scope>BIOTECHNOLOGY</scope>
</reference>
<reference key="4">
    <citation type="journal article" date="2011" name="J. Enzym. Inhib. Med. Chem.">
        <title>Fluorescence, circular dichroism, NMR, and docking studies of the interaction of the alkaloid malbrancheamide with calmodulin.</title>
        <authorList>
            <person name="Figueroa M."/>
            <person name="Gonzalez-Andrade M."/>
            <person name="Sosa-Peinado A."/>
            <person name="Madariaga-Mazon A."/>
            <person name="Del Rio-Portilla F."/>
            <person name="Gonzalez M.C."/>
            <person name="Mata R."/>
        </authorList>
    </citation>
    <scope>BIOTECHNOLOGY</scope>
</reference>
<reference key="5">
    <citation type="journal article" date="2015" name="J. Pharm. Pharmacol.">
        <title>Insights on the vasorelaxant mode of action of malbrancheamide.</title>
        <authorList>
            <person name="Madariaga-Mazon A."/>
            <person name="Hernandez-Abreu O."/>
            <person name="Estrada-Soto S."/>
            <person name="Mata R."/>
        </authorList>
    </citation>
    <scope>BIOTECHNOLOGY</scope>
</reference>
<reference key="6">
    <citation type="journal article" date="2017" name="J. Am. Chem. Soc.">
        <title>Function and structure of MalA/MalA', iterative halogenases for late-stage C-H functionalization of indole alkaloids.</title>
        <authorList>
            <person name="Fraley A.E."/>
            <person name="Garcia-Borras M."/>
            <person name="Tripathi A."/>
            <person name="Khare D."/>
            <person name="Mercado-Marin E.V."/>
            <person name="Tran H."/>
            <person name="Dan Q."/>
            <person name="Webb G.P."/>
            <person name="Watts K.R."/>
            <person name="Crews P."/>
            <person name="Sarpong R."/>
            <person name="Williams R.M."/>
            <person name="Smith J.L."/>
            <person name="Houk K.N."/>
            <person name="Sherman D.H."/>
        </authorList>
    </citation>
    <scope>FUNCTION</scope>
</reference>
<reference key="7">
    <citation type="journal article" date="2019" name="Nat. Chem.">
        <title>Fungal indole alkaloid biogenesis through evolution of a bifunctional reductase/Diels-Alderase.</title>
        <authorList>
            <person name="Dan Q."/>
            <person name="Newmister S.A."/>
            <person name="Klas K.R."/>
            <person name="Fraley A.E."/>
            <person name="McAfoos T.J."/>
            <person name="Somoza A.D."/>
            <person name="Sunderhaus J.D."/>
            <person name="Ye Y."/>
            <person name="Shende V.V."/>
            <person name="Yu F."/>
            <person name="Sanders J.N."/>
            <person name="Brown W.C."/>
            <person name="Zhao L."/>
            <person name="Paton R.S."/>
            <person name="Houk K.N."/>
            <person name="Smith J.L."/>
            <person name="Sherman D.H."/>
            <person name="Williams R.M."/>
        </authorList>
    </citation>
    <scope>FUNCTION</scope>
    <scope>CATALYTIC ACTIVITY</scope>
    <scope>MUTAGENESIS OF TYR-2132</scope>
    <scope>PATHWAY</scope>
</reference>
<proteinExistence type="evidence at protein level"/>
<dbReference type="EC" id="1.-.-.-" evidence="10"/>
<dbReference type="EC" id="6.3.1.-" evidence="10"/>
<dbReference type="EMBL" id="JQ708193">
    <property type="protein sequence ID" value="AGA37267.1"/>
    <property type="molecule type" value="Genomic_DNA"/>
</dbReference>
<dbReference type="SMR" id="L0E2Z1"/>
<dbReference type="BioCyc" id="MetaCyc:MONOMER-21923"/>
<dbReference type="GO" id="GO:0005737">
    <property type="term" value="C:cytoplasm"/>
    <property type="evidence" value="ECO:0007669"/>
    <property type="project" value="TreeGrafter"/>
</dbReference>
<dbReference type="GO" id="GO:0016853">
    <property type="term" value="F:isomerase activity"/>
    <property type="evidence" value="ECO:0007669"/>
    <property type="project" value="UniProtKB-KW"/>
</dbReference>
<dbReference type="GO" id="GO:0016874">
    <property type="term" value="F:ligase activity"/>
    <property type="evidence" value="ECO:0007669"/>
    <property type="project" value="UniProtKB-KW"/>
</dbReference>
<dbReference type="GO" id="GO:0016491">
    <property type="term" value="F:oxidoreductase activity"/>
    <property type="evidence" value="ECO:0007669"/>
    <property type="project" value="UniProtKB-KW"/>
</dbReference>
<dbReference type="GO" id="GO:0031177">
    <property type="term" value="F:phosphopantetheine binding"/>
    <property type="evidence" value="ECO:0007669"/>
    <property type="project" value="InterPro"/>
</dbReference>
<dbReference type="GO" id="GO:0043041">
    <property type="term" value="P:amino acid activation for nonribosomal peptide biosynthetic process"/>
    <property type="evidence" value="ECO:0007669"/>
    <property type="project" value="TreeGrafter"/>
</dbReference>
<dbReference type="GO" id="GO:0044550">
    <property type="term" value="P:secondary metabolite biosynthetic process"/>
    <property type="evidence" value="ECO:0007669"/>
    <property type="project" value="TreeGrafter"/>
</dbReference>
<dbReference type="CDD" id="cd05918">
    <property type="entry name" value="A_NRPS_SidN3_like"/>
    <property type="match status" value="2"/>
</dbReference>
<dbReference type="CDD" id="cd19545">
    <property type="entry name" value="FUM14_C_NRPS-like"/>
    <property type="match status" value="1"/>
</dbReference>
<dbReference type="FunFam" id="3.30.300.30:FF:000015">
    <property type="entry name" value="Nonribosomal peptide synthase SidD"/>
    <property type="match status" value="2"/>
</dbReference>
<dbReference type="FunFam" id="3.40.50.12780:FF:000014">
    <property type="entry name" value="Nonribosomal peptide synthetase 1"/>
    <property type="match status" value="1"/>
</dbReference>
<dbReference type="Gene3D" id="3.30.300.30">
    <property type="match status" value="2"/>
</dbReference>
<dbReference type="Gene3D" id="1.10.1200.10">
    <property type="entry name" value="ACP-like"/>
    <property type="match status" value="2"/>
</dbReference>
<dbReference type="Gene3D" id="3.30.559.10">
    <property type="entry name" value="Chloramphenicol acetyltransferase-like domain"/>
    <property type="match status" value="1"/>
</dbReference>
<dbReference type="Gene3D" id="3.40.50.12780">
    <property type="entry name" value="N-terminal domain of ligase-like"/>
    <property type="match status" value="2"/>
</dbReference>
<dbReference type="Gene3D" id="3.40.50.720">
    <property type="entry name" value="NAD(P)-binding Rossmann-like Domain"/>
    <property type="match status" value="1"/>
</dbReference>
<dbReference type="Gene3D" id="3.30.559.30">
    <property type="entry name" value="Nonribosomal peptide synthetase, condensation domain"/>
    <property type="match status" value="1"/>
</dbReference>
<dbReference type="InterPro" id="IPR010071">
    <property type="entry name" value="AA_adenyl_dom"/>
</dbReference>
<dbReference type="InterPro" id="IPR036736">
    <property type="entry name" value="ACP-like_sf"/>
</dbReference>
<dbReference type="InterPro" id="IPR045851">
    <property type="entry name" value="AMP-bd_C_sf"/>
</dbReference>
<dbReference type="InterPro" id="IPR020845">
    <property type="entry name" value="AMP-binding_CS"/>
</dbReference>
<dbReference type="InterPro" id="IPR000873">
    <property type="entry name" value="AMP-dep_synth/lig_dom"/>
</dbReference>
<dbReference type="InterPro" id="IPR042099">
    <property type="entry name" value="ANL_N_sf"/>
</dbReference>
<dbReference type="InterPro" id="IPR023213">
    <property type="entry name" value="CAT-like_dom_sf"/>
</dbReference>
<dbReference type="InterPro" id="IPR001242">
    <property type="entry name" value="Condensatn"/>
</dbReference>
<dbReference type="InterPro" id="IPR013120">
    <property type="entry name" value="Far_NAD-bd"/>
</dbReference>
<dbReference type="InterPro" id="IPR036291">
    <property type="entry name" value="NAD(P)-bd_dom_sf"/>
</dbReference>
<dbReference type="InterPro" id="IPR020806">
    <property type="entry name" value="PKS_PP-bd"/>
</dbReference>
<dbReference type="InterPro" id="IPR009081">
    <property type="entry name" value="PP-bd_ACP"/>
</dbReference>
<dbReference type="InterPro" id="IPR006162">
    <property type="entry name" value="Ppantetheine_attach_site"/>
</dbReference>
<dbReference type="NCBIfam" id="TIGR01733">
    <property type="entry name" value="AA-adenyl-dom"/>
    <property type="match status" value="1"/>
</dbReference>
<dbReference type="PANTHER" id="PTHR45527:SF16">
    <property type="entry name" value="NONRIBOSOMAL PEPTIDE SYNTHASE ATNA-RELATED"/>
    <property type="match status" value="1"/>
</dbReference>
<dbReference type="PANTHER" id="PTHR45527">
    <property type="entry name" value="NONRIBOSOMAL PEPTIDE SYNTHETASE"/>
    <property type="match status" value="1"/>
</dbReference>
<dbReference type="Pfam" id="PF00501">
    <property type="entry name" value="AMP-binding"/>
    <property type="match status" value="2"/>
</dbReference>
<dbReference type="Pfam" id="PF00668">
    <property type="entry name" value="Condensation"/>
    <property type="match status" value="1"/>
</dbReference>
<dbReference type="Pfam" id="PF07993">
    <property type="entry name" value="NAD_binding_4"/>
    <property type="match status" value="1"/>
</dbReference>
<dbReference type="Pfam" id="PF00550">
    <property type="entry name" value="PP-binding"/>
    <property type="match status" value="2"/>
</dbReference>
<dbReference type="SMART" id="SM00823">
    <property type="entry name" value="PKS_PP"/>
    <property type="match status" value="2"/>
</dbReference>
<dbReference type="SUPFAM" id="SSF56801">
    <property type="entry name" value="Acetyl-CoA synthetase-like"/>
    <property type="match status" value="2"/>
</dbReference>
<dbReference type="SUPFAM" id="SSF47336">
    <property type="entry name" value="ACP-like"/>
    <property type="match status" value="2"/>
</dbReference>
<dbReference type="SUPFAM" id="SSF52777">
    <property type="entry name" value="CoA-dependent acyltransferases"/>
    <property type="match status" value="2"/>
</dbReference>
<dbReference type="SUPFAM" id="SSF51735">
    <property type="entry name" value="NAD(P)-binding Rossmann-fold domains"/>
    <property type="match status" value="1"/>
</dbReference>
<dbReference type="PROSITE" id="PS00455">
    <property type="entry name" value="AMP_BINDING"/>
    <property type="match status" value="2"/>
</dbReference>
<dbReference type="PROSITE" id="PS50075">
    <property type="entry name" value="CARRIER"/>
    <property type="match status" value="2"/>
</dbReference>
<dbReference type="PROSITE" id="PS00012">
    <property type="entry name" value="PHOSPHOPANTETHEINE"/>
    <property type="match status" value="2"/>
</dbReference>